<evidence type="ECO:0000255" key="1">
    <source>
        <dbReference type="HAMAP-Rule" id="MF_01872"/>
    </source>
</evidence>
<comment type="function">
    <text evidence="1">Specifically methylates the adenine in position 37 of tRNA(1)(Val) (anticodon cmo5UAC).</text>
</comment>
<comment type="catalytic activity">
    <reaction evidence="1">
        <text>adenosine(37) in tRNA1(Val) + S-adenosyl-L-methionine = N(6)-methyladenosine(37) in tRNA1(Val) + S-adenosyl-L-homocysteine + H(+)</text>
        <dbReference type="Rhea" id="RHEA:43160"/>
        <dbReference type="Rhea" id="RHEA-COMP:10369"/>
        <dbReference type="Rhea" id="RHEA-COMP:10370"/>
        <dbReference type="ChEBI" id="CHEBI:15378"/>
        <dbReference type="ChEBI" id="CHEBI:57856"/>
        <dbReference type="ChEBI" id="CHEBI:59789"/>
        <dbReference type="ChEBI" id="CHEBI:74411"/>
        <dbReference type="ChEBI" id="CHEBI:74449"/>
        <dbReference type="EC" id="2.1.1.223"/>
    </reaction>
</comment>
<comment type="subcellular location">
    <subcellularLocation>
        <location evidence="1">Cytoplasm</location>
    </subcellularLocation>
</comment>
<comment type="similarity">
    <text evidence="1">Belongs to the methyltransferase superfamily. tRNA (adenine-N(6)-)-methyltransferase family.</text>
</comment>
<organism>
    <name type="scientific">Flavobacterium psychrophilum (strain ATCC 49511 / DSM 21280 / CIP 103535 / JIP02/86)</name>
    <dbReference type="NCBI Taxonomy" id="402612"/>
    <lineage>
        <taxon>Bacteria</taxon>
        <taxon>Pseudomonadati</taxon>
        <taxon>Bacteroidota</taxon>
        <taxon>Flavobacteriia</taxon>
        <taxon>Flavobacteriales</taxon>
        <taxon>Flavobacteriaceae</taxon>
        <taxon>Flavobacterium</taxon>
    </lineage>
</organism>
<protein>
    <recommendedName>
        <fullName evidence="1">tRNA1(Val) (adenine(37)-N6)-methyltransferase</fullName>
        <ecNumber evidence="1">2.1.1.223</ecNumber>
    </recommendedName>
    <alternativeName>
        <fullName evidence="1">tRNA m6A37 methyltransferase</fullName>
    </alternativeName>
</protein>
<keyword id="KW-0963">Cytoplasm</keyword>
<keyword id="KW-0489">Methyltransferase</keyword>
<keyword id="KW-1185">Reference proteome</keyword>
<keyword id="KW-0949">S-adenosyl-L-methionine</keyword>
<keyword id="KW-0808">Transferase</keyword>
<keyword id="KW-0819">tRNA processing</keyword>
<sequence length="234" mass="26705">MFSFKQFSVQQDKTAMKVGTDGVLLGAWTPINHNPISILDIGAGTGLIALMLAQRTSAVQIDALEIDEEAYEQATDNFENSPWSDRLFCYHAGLDEFVEEPEDEYDLIVCNPPFYAENYKTNSEQRDLARFSDAMPFEELIEAADLLLSENGILSVIIPYKEEEKFVTLANEFELYPIKITRVKGTPTSETKRSLLVFSRNKQNCEQDILVIETDRHVYTKEYIALTKGFYLKM</sequence>
<name>TRMN6_FLAPJ</name>
<gene>
    <name type="ordered locus">FP0346</name>
</gene>
<feature type="chain" id="PRO_0000387381" description="tRNA1(Val) (adenine(37)-N6)-methyltransferase">
    <location>
        <begin position="1"/>
        <end position="234"/>
    </location>
</feature>
<reference key="1">
    <citation type="journal article" date="2007" name="Nat. Biotechnol.">
        <title>Complete genome sequence of the fish pathogen Flavobacterium psychrophilum.</title>
        <authorList>
            <person name="Duchaud E."/>
            <person name="Boussaha M."/>
            <person name="Loux V."/>
            <person name="Bernardet J.-F."/>
            <person name="Michel C."/>
            <person name="Kerouault B."/>
            <person name="Mondot S."/>
            <person name="Nicolas P."/>
            <person name="Bossy R."/>
            <person name="Caron C."/>
            <person name="Bessieres P."/>
            <person name="Gibrat J.-F."/>
            <person name="Claverol S."/>
            <person name="Dumetz F."/>
            <person name="Le Henaff M."/>
            <person name="Benmansour A."/>
        </authorList>
    </citation>
    <scope>NUCLEOTIDE SEQUENCE [LARGE SCALE GENOMIC DNA]</scope>
    <source>
        <strain>ATCC 49511 / DSM 21280 / CIP 103535 / JIP02/86</strain>
    </source>
</reference>
<proteinExistence type="inferred from homology"/>
<dbReference type="EC" id="2.1.1.223" evidence="1"/>
<dbReference type="EMBL" id="AM398681">
    <property type="protein sequence ID" value="CAL42459.1"/>
    <property type="molecule type" value="Genomic_DNA"/>
</dbReference>
<dbReference type="RefSeq" id="WP_011962517.1">
    <property type="nucleotide sequence ID" value="NC_009613.3"/>
</dbReference>
<dbReference type="RefSeq" id="YP_001295277.1">
    <property type="nucleotide sequence ID" value="NC_009613.3"/>
</dbReference>
<dbReference type="SMR" id="A6GWI6"/>
<dbReference type="STRING" id="402612.FP0346"/>
<dbReference type="EnsemblBacteria" id="CAL42459">
    <property type="protein sequence ID" value="CAL42459"/>
    <property type="gene ID" value="FP0346"/>
</dbReference>
<dbReference type="KEGG" id="fps:FP0346"/>
<dbReference type="PATRIC" id="fig|402612.5.peg.358"/>
<dbReference type="eggNOG" id="COG4123">
    <property type="taxonomic scope" value="Bacteria"/>
</dbReference>
<dbReference type="HOGENOM" id="CLU_061983_0_0_10"/>
<dbReference type="OrthoDB" id="5383291at2"/>
<dbReference type="Proteomes" id="UP000006394">
    <property type="component" value="Chromosome"/>
</dbReference>
<dbReference type="GO" id="GO:0005737">
    <property type="term" value="C:cytoplasm"/>
    <property type="evidence" value="ECO:0007669"/>
    <property type="project" value="UniProtKB-SubCell"/>
</dbReference>
<dbReference type="GO" id="GO:0003676">
    <property type="term" value="F:nucleic acid binding"/>
    <property type="evidence" value="ECO:0007669"/>
    <property type="project" value="InterPro"/>
</dbReference>
<dbReference type="GO" id="GO:0016430">
    <property type="term" value="F:tRNA (adenine-N6)-methyltransferase activity"/>
    <property type="evidence" value="ECO:0007669"/>
    <property type="project" value="UniProtKB-UniRule"/>
</dbReference>
<dbReference type="GO" id="GO:0032259">
    <property type="term" value="P:methylation"/>
    <property type="evidence" value="ECO:0007669"/>
    <property type="project" value="UniProtKB-KW"/>
</dbReference>
<dbReference type="GO" id="GO:0008033">
    <property type="term" value="P:tRNA processing"/>
    <property type="evidence" value="ECO:0007669"/>
    <property type="project" value="UniProtKB-UniRule"/>
</dbReference>
<dbReference type="CDD" id="cd02440">
    <property type="entry name" value="AdoMet_MTases"/>
    <property type="match status" value="1"/>
</dbReference>
<dbReference type="Gene3D" id="3.40.50.150">
    <property type="entry name" value="Vaccinia Virus protein VP39"/>
    <property type="match status" value="1"/>
</dbReference>
<dbReference type="HAMAP" id="MF_01872">
    <property type="entry name" value="tRNA_methyltr_YfiC"/>
    <property type="match status" value="1"/>
</dbReference>
<dbReference type="InterPro" id="IPR002052">
    <property type="entry name" value="DNA_methylase_N6_adenine_CS"/>
</dbReference>
<dbReference type="InterPro" id="IPR029063">
    <property type="entry name" value="SAM-dependent_MTases_sf"/>
</dbReference>
<dbReference type="InterPro" id="IPR007848">
    <property type="entry name" value="Small_mtfrase_dom"/>
</dbReference>
<dbReference type="InterPro" id="IPR050210">
    <property type="entry name" value="tRNA_Adenine-N(6)_MTase"/>
</dbReference>
<dbReference type="InterPro" id="IPR022882">
    <property type="entry name" value="tRNA_adenine-N6_MeTrfase"/>
</dbReference>
<dbReference type="PANTHER" id="PTHR47739">
    <property type="entry name" value="TRNA1(VAL) (ADENINE(37)-N6)-METHYLTRANSFERASE"/>
    <property type="match status" value="1"/>
</dbReference>
<dbReference type="PANTHER" id="PTHR47739:SF1">
    <property type="entry name" value="TRNA1(VAL) (ADENINE(37)-N6)-METHYLTRANSFERASE"/>
    <property type="match status" value="1"/>
</dbReference>
<dbReference type="Pfam" id="PF05175">
    <property type="entry name" value="MTS"/>
    <property type="match status" value="1"/>
</dbReference>
<dbReference type="PRINTS" id="PR00507">
    <property type="entry name" value="N12N6MTFRASE"/>
</dbReference>
<dbReference type="SUPFAM" id="SSF53335">
    <property type="entry name" value="S-adenosyl-L-methionine-dependent methyltransferases"/>
    <property type="match status" value="1"/>
</dbReference>
<dbReference type="PROSITE" id="PS00092">
    <property type="entry name" value="N6_MTASE"/>
    <property type="match status" value="1"/>
</dbReference>
<accession>A6GWI6</accession>